<protein>
    <recommendedName>
        <fullName evidence="1">Pescadillo homolog</fullName>
    </recommendedName>
</protein>
<comment type="function">
    <text evidence="1">Required for maturation of ribosomal RNAs and formation of the large ribosomal subunit.</text>
</comment>
<comment type="subcellular location">
    <subcellularLocation>
        <location evidence="1">Nucleus</location>
        <location evidence="1">Nucleolus</location>
    </subcellularLocation>
    <subcellularLocation>
        <location evidence="1">Nucleus</location>
        <location evidence="1">Nucleoplasm</location>
    </subcellularLocation>
</comment>
<comment type="similarity">
    <text evidence="1">Belongs to the pescadillo family.</text>
</comment>
<gene>
    <name type="ORF">v1g194255</name>
</gene>
<accession>A7SWH1</accession>
<evidence type="ECO:0000255" key="1">
    <source>
        <dbReference type="HAMAP-Rule" id="MF_03028"/>
    </source>
</evidence>
<evidence type="ECO:0000256" key="2">
    <source>
        <dbReference type="SAM" id="MobiDB-lite"/>
    </source>
</evidence>
<sequence length="515" mass="60126">MGKLKKKGERGAATNYVSRNQALKKLQLSLPDFRRLCILKGIYPVEPKNKKKVNKGSTANKTYYYVKDIQWLAHEPVLNKFREFKVFLRKLKKAIAKEQPGTADRLEDNKPVYTLDHIVKERYPTFIDALRDLDDALSMLFLFSIMPQTDKIQAAVVQDCRRLSVEFQHYIISSRSLRKVFFSIKGIYFQAEIQGQTITWITPYQFCQDPPTDVDFRVMLTFVDFYKTMMGFINFKLYNNLNMHYPPVLADKTDKKLDTNYCKDTEVEDEVLAALNHTLKIIQTQEEDLEVDEFPIDPNSEDAEAIQAQKEEETKLERLKNLFSECKVFLSREVPRETLVFMIRSFGGQVSWDVSTAIGATFAETDESITHQIVDRPSQGHQFLSRYYIQPQWVADSINQGKLLPVEEYFPGEELPPHLSPFVKEEEGDYVPPERKAIMDQEMDTNQNEVTEEEEVPDMTREEKELAVAAMPRKDRRLYEKIMHSKKKKRSEVRKLESKRKVHDEEKAKKKLKSS</sequence>
<proteinExistence type="inferred from homology"/>
<organism>
    <name type="scientific">Nematostella vectensis</name>
    <name type="common">Starlet sea anemone</name>
    <dbReference type="NCBI Taxonomy" id="45351"/>
    <lineage>
        <taxon>Eukaryota</taxon>
        <taxon>Metazoa</taxon>
        <taxon>Cnidaria</taxon>
        <taxon>Anthozoa</taxon>
        <taxon>Hexacorallia</taxon>
        <taxon>Actiniaria</taxon>
        <taxon>Edwardsiidae</taxon>
        <taxon>Nematostella</taxon>
    </lineage>
</organism>
<dbReference type="EMBL" id="DS469859">
    <property type="protein sequence ID" value="EDO31954.1"/>
    <property type="molecule type" value="Genomic_DNA"/>
</dbReference>
<dbReference type="RefSeq" id="XP_001624054.1">
    <property type="nucleotide sequence ID" value="XM_001624004.1"/>
</dbReference>
<dbReference type="SMR" id="A7SWH1"/>
<dbReference type="STRING" id="45351.A7SWH1"/>
<dbReference type="EnsemblMetazoa" id="EDO31954">
    <property type="protein sequence ID" value="EDO31954"/>
    <property type="gene ID" value="NEMVEDRAFT_v1g194255"/>
</dbReference>
<dbReference type="KEGG" id="nve:5502932"/>
<dbReference type="eggNOG" id="KOG2481">
    <property type="taxonomic scope" value="Eukaryota"/>
</dbReference>
<dbReference type="HOGENOM" id="CLU_019619_0_0_1"/>
<dbReference type="InParanoid" id="A7SWH1"/>
<dbReference type="OMA" id="QKVTWIV"/>
<dbReference type="OrthoDB" id="10264910at2759"/>
<dbReference type="PhylomeDB" id="A7SWH1"/>
<dbReference type="Proteomes" id="UP000001593">
    <property type="component" value="Unassembled WGS sequence"/>
</dbReference>
<dbReference type="GO" id="GO:0005654">
    <property type="term" value="C:nucleoplasm"/>
    <property type="evidence" value="ECO:0007669"/>
    <property type="project" value="UniProtKB-SubCell"/>
</dbReference>
<dbReference type="GO" id="GO:0070545">
    <property type="term" value="C:PeBoW complex"/>
    <property type="evidence" value="ECO:0000318"/>
    <property type="project" value="GO_Central"/>
</dbReference>
<dbReference type="GO" id="GO:0030687">
    <property type="term" value="C:preribosome, large subunit precursor"/>
    <property type="evidence" value="ECO:0007669"/>
    <property type="project" value="UniProtKB-UniRule"/>
</dbReference>
<dbReference type="GO" id="GO:0043021">
    <property type="term" value="F:ribonucleoprotein complex binding"/>
    <property type="evidence" value="ECO:0007669"/>
    <property type="project" value="UniProtKB-UniRule"/>
</dbReference>
<dbReference type="GO" id="GO:0003723">
    <property type="term" value="F:RNA binding"/>
    <property type="evidence" value="ECO:0000318"/>
    <property type="project" value="GO_Central"/>
</dbReference>
<dbReference type="GO" id="GO:0000466">
    <property type="term" value="P:maturation of 5.8S rRNA from tricistronic rRNA transcript (SSU-rRNA, 5.8S rRNA, LSU-rRNA)"/>
    <property type="evidence" value="ECO:0007669"/>
    <property type="project" value="UniProtKB-UniRule"/>
</dbReference>
<dbReference type="GO" id="GO:0000463">
    <property type="term" value="P:maturation of LSU-rRNA from tricistronic rRNA transcript (SSU-rRNA, 5.8S rRNA, LSU-rRNA)"/>
    <property type="evidence" value="ECO:0000318"/>
    <property type="project" value="GO_Central"/>
</dbReference>
<dbReference type="CDD" id="cd17709">
    <property type="entry name" value="BRCT_pescadillo_like"/>
    <property type="match status" value="1"/>
</dbReference>
<dbReference type="FunFam" id="3.40.50.10190:FF:000002">
    <property type="entry name" value="Pescadillo homolog"/>
    <property type="match status" value="1"/>
</dbReference>
<dbReference type="Gene3D" id="3.40.50.10190">
    <property type="entry name" value="BRCT domain"/>
    <property type="match status" value="1"/>
</dbReference>
<dbReference type="HAMAP" id="MF_03028">
    <property type="entry name" value="Pescadillo"/>
    <property type="match status" value="1"/>
</dbReference>
<dbReference type="InterPro" id="IPR001357">
    <property type="entry name" value="BRCT_dom"/>
</dbReference>
<dbReference type="InterPro" id="IPR036420">
    <property type="entry name" value="BRCT_dom_sf"/>
</dbReference>
<dbReference type="InterPro" id="IPR010613">
    <property type="entry name" value="PES"/>
</dbReference>
<dbReference type="PANTHER" id="PTHR12221">
    <property type="entry name" value="PESCADILLO - RELATED"/>
    <property type="match status" value="1"/>
</dbReference>
<dbReference type="PANTHER" id="PTHR12221:SF6">
    <property type="entry name" value="PESCADILLO HOMOLOG"/>
    <property type="match status" value="1"/>
</dbReference>
<dbReference type="Pfam" id="PF16589">
    <property type="entry name" value="BRCT_2"/>
    <property type="match status" value="1"/>
</dbReference>
<dbReference type="Pfam" id="PF06732">
    <property type="entry name" value="Pescadillo_N"/>
    <property type="match status" value="1"/>
</dbReference>
<dbReference type="SMART" id="SM00292">
    <property type="entry name" value="BRCT"/>
    <property type="match status" value="1"/>
</dbReference>
<dbReference type="SUPFAM" id="SSF52113">
    <property type="entry name" value="BRCT domain"/>
    <property type="match status" value="1"/>
</dbReference>
<dbReference type="PROSITE" id="PS50172">
    <property type="entry name" value="BRCT"/>
    <property type="match status" value="1"/>
</dbReference>
<reference key="1">
    <citation type="journal article" date="2007" name="Science">
        <title>Sea anemone genome reveals ancestral eumetazoan gene repertoire and genomic organization.</title>
        <authorList>
            <person name="Putnam N.H."/>
            <person name="Srivastava M."/>
            <person name="Hellsten U."/>
            <person name="Dirks B."/>
            <person name="Chapman J."/>
            <person name="Salamov A."/>
            <person name="Terry A."/>
            <person name="Shapiro H."/>
            <person name="Lindquist E."/>
            <person name="Kapitonov V.V."/>
            <person name="Jurka J."/>
            <person name="Genikhovich G."/>
            <person name="Grigoriev I.V."/>
            <person name="Lucas S.M."/>
            <person name="Steele R.E."/>
            <person name="Finnerty J.R."/>
            <person name="Technau U."/>
            <person name="Martindale M.Q."/>
            <person name="Rokhsar D.S."/>
        </authorList>
    </citation>
    <scope>NUCLEOTIDE SEQUENCE [LARGE SCALE GENOMIC DNA]</scope>
    <source>
        <strain>CH2 X CH6</strain>
    </source>
</reference>
<feature type="chain" id="PRO_0000370469" description="Pescadillo homolog">
    <location>
        <begin position="1"/>
        <end position="515"/>
    </location>
</feature>
<feature type="domain" description="BRCT" evidence="1">
    <location>
        <begin position="318"/>
        <end position="411"/>
    </location>
</feature>
<feature type="region of interest" description="Disordered" evidence="2">
    <location>
        <begin position="477"/>
        <end position="515"/>
    </location>
</feature>
<feature type="coiled-coil region" evidence="1">
    <location>
        <begin position="270"/>
        <end position="327"/>
    </location>
</feature>
<feature type="compositionally biased region" description="Basic residues" evidence="2">
    <location>
        <begin position="484"/>
        <end position="501"/>
    </location>
</feature>
<name>PESC_NEMVE</name>
<keyword id="KW-0175">Coiled coil</keyword>
<keyword id="KW-0539">Nucleus</keyword>
<keyword id="KW-1185">Reference proteome</keyword>
<keyword id="KW-0690">Ribosome biogenesis</keyword>
<keyword id="KW-0698">rRNA processing</keyword>